<evidence type="ECO:0000250" key="1">
    <source>
        <dbReference type="UniProtKB" id="P12691"/>
    </source>
</evidence>
<evidence type="ECO:0000255" key="2"/>
<evidence type="ECO:0000269" key="3">
    <source>
    </source>
</evidence>
<evidence type="ECO:0000269" key="4">
    <source>
    </source>
</evidence>
<evidence type="ECO:0000305" key="5"/>
<evidence type="ECO:0000305" key="6">
    <source>
    </source>
</evidence>
<sequence length="404" mass="46475">MSENILTEPPRSDADNEGYVDRKRHLWILSVLWPATPIIGLYLVSQTGWSIWYGLVLILWYGLVPLIDTMLGEDYSNPPESVVPKLEQDRYYKVLTYLTVPIHYAALIISAWWVSTQPIGVFEFLALALSLGIVNGLALNTGHELGHKKETFDRWMAKLVLAVVGYGHFFIEHNKGHHRDVATPMDPATSRMGESIYTFSLREIPGAFKRAWGLEEQRLSRCGKSVWSLDNEVLQPMILTVVLYAALLAFFGPLMLIFLPIQMAFGWWQLTSANYIEHYGLLREKLPNGRYEHQKPHHSWNSNHVMSNLILFHLQRHSDHHAHPTRSYQSLRDFSDLPTLPTGYPGMFFVAFFPSWFRSLMDDRVMEWAHGDINKIQIQPGMREFYEQKFGVKGSESPDTTVAK</sequence>
<reference key="1">
    <citation type="journal article" date="2004" name="Environ. Microbiol.">
        <title>Cloning and functional analysis of alkB genes in Alcanivorax borkumensis SK2.</title>
        <authorList>
            <person name="Hara A."/>
            <person name="Baik S.H."/>
            <person name="Syutsubo K."/>
            <person name="Misawa N."/>
            <person name="Smits T.H."/>
            <person name="van Beilen J.B."/>
            <person name="Harayama S."/>
        </authorList>
    </citation>
    <scope>NUCLEOTIDE SEQUENCE [GENOMIC DNA]</scope>
    <scope>FUNCTION IN ALKANE DEGRADATION</scope>
</reference>
<reference key="2">
    <citation type="journal article" date="2006" name="Nat. Biotechnol.">
        <title>Genome sequence of the ubiquitous hydrocarbon-degrading marine bacterium Alcanivorax borkumensis.</title>
        <authorList>
            <person name="Schneiker S."/>
            <person name="Martins dos Santos V.A.P."/>
            <person name="Bartels D."/>
            <person name="Bekel T."/>
            <person name="Brecht M."/>
            <person name="Buhrmester J."/>
            <person name="Chernikova T.N."/>
            <person name="Denaro R."/>
            <person name="Ferrer M."/>
            <person name="Gertler C."/>
            <person name="Goesmann A."/>
            <person name="Golyshina O.V."/>
            <person name="Kaminski F."/>
            <person name="Khachane A.N."/>
            <person name="Lang S."/>
            <person name="Linke B."/>
            <person name="McHardy A.C."/>
            <person name="Meyer F."/>
            <person name="Nechitaylo T."/>
            <person name="Puehler A."/>
            <person name="Regenhardt D."/>
            <person name="Rupp O."/>
            <person name="Sabirova J.S."/>
            <person name="Selbitschka W."/>
            <person name="Yakimov M.M."/>
            <person name="Timmis K.N."/>
            <person name="Vorhoelter F.-J."/>
            <person name="Weidner S."/>
            <person name="Kaiser O."/>
            <person name="Golyshin P.N."/>
        </authorList>
    </citation>
    <scope>NUCLEOTIDE SEQUENCE [LARGE SCALE GENOMIC DNA]</scope>
    <source>
        <strain>ATCC 700651 / DSM 11573 / NCIMB 13689 / SK2</strain>
    </source>
</reference>
<reference key="3">
    <citation type="journal article" date="2004" name="Environ. Microbiol.">
        <title>Characterization of two alkane hydroxylase genes from the marine hydrocarbonoclastic bacterium Alcanivorax borkumensis.</title>
        <authorList>
            <person name="van Beilen J.B."/>
            <person name="Marin M.M."/>
            <person name="Smits T.H."/>
            <person name="Rothlisberger M."/>
            <person name="Franchini A.G."/>
            <person name="Witholt B."/>
            <person name="Rojo F."/>
        </authorList>
    </citation>
    <scope>FUNCTION</scope>
    <scope>SUBSTRATE SPECIFICITY</scope>
    <scope>INDUCTION</scope>
    <source>
        <strain>AP1</strain>
    </source>
</reference>
<dbReference type="EC" id="1.14.15.3"/>
<dbReference type="EMBL" id="AB110225">
    <property type="protein sequence ID" value="BAC98365.1"/>
    <property type="molecule type" value="Genomic_DNA"/>
</dbReference>
<dbReference type="EMBL" id="AM286690">
    <property type="protein sequence ID" value="CAL18155.1"/>
    <property type="molecule type" value="Genomic_DNA"/>
</dbReference>
<dbReference type="RefSeq" id="WP_011589978.1">
    <property type="nucleotide sequence ID" value="NC_008260.1"/>
</dbReference>
<dbReference type="SMR" id="Q0VKZ3"/>
<dbReference type="STRING" id="393595.ABO_2707"/>
<dbReference type="KEGG" id="abo:ABO_2707"/>
<dbReference type="eggNOG" id="COG3239">
    <property type="taxonomic scope" value="Bacteria"/>
</dbReference>
<dbReference type="HOGENOM" id="CLU_044462_1_0_6"/>
<dbReference type="OrthoDB" id="4759734at2"/>
<dbReference type="UniPathway" id="UPA00191"/>
<dbReference type="Proteomes" id="UP000008871">
    <property type="component" value="Chromosome"/>
</dbReference>
<dbReference type="GO" id="GO:0005886">
    <property type="term" value="C:plasma membrane"/>
    <property type="evidence" value="ECO:0007669"/>
    <property type="project" value="UniProtKB-SubCell"/>
</dbReference>
<dbReference type="GO" id="GO:0018685">
    <property type="term" value="F:alkane 1-monooxygenase activity"/>
    <property type="evidence" value="ECO:0000314"/>
    <property type="project" value="UniProtKB"/>
</dbReference>
<dbReference type="GO" id="GO:0046872">
    <property type="term" value="F:metal ion binding"/>
    <property type="evidence" value="ECO:0007669"/>
    <property type="project" value="UniProtKB-KW"/>
</dbReference>
<dbReference type="GO" id="GO:0043448">
    <property type="term" value="P:alkane catabolic process"/>
    <property type="evidence" value="ECO:0000314"/>
    <property type="project" value="UniProtKB"/>
</dbReference>
<dbReference type="GO" id="GO:0006629">
    <property type="term" value="P:lipid metabolic process"/>
    <property type="evidence" value="ECO:0007669"/>
    <property type="project" value="InterPro"/>
</dbReference>
<dbReference type="CDD" id="cd03512">
    <property type="entry name" value="Alkane-hydroxylase"/>
    <property type="match status" value="1"/>
</dbReference>
<dbReference type="InterPro" id="IPR033885">
    <property type="entry name" value="AlkB/XylM"/>
</dbReference>
<dbReference type="InterPro" id="IPR005804">
    <property type="entry name" value="FA_desaturase_dom"/>
</dbReference>
<dbReference type="PANTHER" id="PTHR38674">
    <property type="entry name" value="ALKANE 1-MONOOXYGENASE 1"/>
    <property type="match status" value="1"/>
</dbReference>
<dbReference type="PANTHER" id="PTHR38674:SF1">
    <property type="entry name" value="ALKANE 1-MONOOXYGENASE 1"/>
    <property type="match status" value="1"/>
</dbReference>
<dbReference type="Pfam" id="PF00487">
    <property type="entry name" value="FA_desaturase"/>
    <property type="match status" value="1"/>
</dbReference>
<name>ALKB1_ALCBS</name>
<keyword id="KW-0997">Cell inner membrane</keyword>
<keyword id="KW-1003">Cell membrane</keyword>
<keyword id="KW-0408">Iron</keyword>
<keyword id="KW-0472">Membrane</keyword>
<keyword id="KW-0479">Metal-binding</keyword>
<keyword id="KW-0503">Monooxygenase</keyword>
<keyword id="KW-0560">Oxidoreductase</keyword>
<keyword id="KW-1185">Reference proteome</keyword>
<keyword id="KW-0812">Transmembrane</keyword>
<keyword id="KW-1133">Transmembrane helix</keyword>
<protein>
    <recommendedName>
        <fullName>Alkane 1-monooxygenase 1</fullName>
        <ecNumber>1.14.15.3</ecNumber>
    </recommendedName>
    <alternativeName>
        <fullName>Alkane hydroxylase</fullName>
        <shortName>AHs</shortName>
    </alternativeName>
    <alternativeName>
        <fullName>Terminal alkane hydroxylase</fullName>
    </alternativeName>
</protein>
<feature type="chain" id="PRO_0000392216" description="Alkane 1-monooxygenase 1">
    <location>
        <begin position="1"/>
        <end position="404"/>
    </location>
</feature>
<feature type="transmembrane region" description="Helical" evidence="2">
    <location>
        <begin position="25"/>
        <end position="45"/>
    </location>
</feature>
<feature type="transmembrane region" description="Helical" evidence="2">
    <location>
        <begin position="47"/>
        <end position="67"/>
    </location>
</feature>
<feature type="transmembrane region" description="Helical" evidence="2">
    <location>
        <begin position="94"/>
        <end position="114"/>
    </location>
</feature>
<feature type="transmembrane region" description="Helical" evidence="2">
    <location>
        <begin position="119"/>
        <end position="139"/>
    </location>
</feature>
<feature type="transmembrane region" description="Helical" evidence="2">
    <location>
        <begin position="151"/>
        <end position="171"/>
    </location>
</feature>
<feature type="transmembrane region" description="Helical" evidence="2">
    <location>
        <begin position="241"/>
        <end position="261"/>
    </location>
</feature>
<feature type="binding site" evidence="1">
    <location>
        <position position="143"/>
    </location>
    <ligand>
        <name>Fe cation</name>
        <dbReference type="ChEBI" id="CHEBI:24875"/>
        <label>1</label>
    </ligand>
</feature>
<feature type="binding site" evidence="1">
    <location>
        <position position="147"/>
    </location>
    <ligand>
        <name>Fe cation</name>
        <dbReference type="ChEBI" id="CHEBI:24875"/>
        <label>1</label>
    </ligand>
</feature>
<feature type="binding site" evidence="1">
    <location>
        <position position="173"/>
    </location>
    <ligand>
        <name>Fe cation</name>
        <dbReference type="ChEBI" id="CHEBI:24875"/>
        <label>1</label>
    </ligand>
</feature>
<feature type="binding site" evidence="1">
    <location>
        <position position="177"/>
    </location>
    <ligand>
        <name>Fe cation</name>
        <dbReference type="ChEBI" id="CHEBI:24875"/>
        <label>1</label>
    </ligand>
</feature>
<feature type="binding site" evidence="1">
    <location>
        <position position="178"/>
    </location>
    <ligand>
        <name>Fe cation</name>
        <dbReference type="ChEBI" id="CHEBI:24875"/>
        <label>2</label>
    </ligand>
</feature>
<feature type="binding site" evidence="1">
    <location>
        <position position="317"/>
    </location>
    <ligand>
        <name>Fe cation</name>
        <dbReference type="ChEBI" id="CHEBI:24875"/>
        <label>2</label>
    </ligand>
</feature>
<feature type="binding site" evidence="1">
    <location>
        <position position="320"/>
    </location>
    <ligand>
        <name>Fe cation</name>
        <dbReference type="ChEBI" id="CHEBI:24875"/>
        <label>2</label>
    </ligand>
</feature>
<feature type="binding site" evidence="1">
    <location>
        <position position="321"/>
    </location>
    <ligand>
        <name>Fe cation</name>
        <dbReference type="ChEBI" id="CHEBI:24875"/>
        <label>2</label>
    </ligand>
</feature>
<comment type="function">
    <text evidence="3 4">Catalyzes the hydroxylation of n-alkanes and fatty acids in the presence of a NADH-rubredoxin reductase and rubredoxin. It preferably hydroxylases C5-C12 hydrocarbons.</text>
</comment>
<comment type="catalytic activity">
    <reaction evidence="6">
        <text>octane + 2 reduced [rubredoxin] + O2 + 2 H(+) = 2 oxidized [rubredoxin] + octan-1-ol + H2O</text>
        <dbReference type="Rhea" id="RHEA:19341"/>
        <dbReference type="Rhea" id="RHEA-COMP:10302"/>
        <dbReference type="Rhea" id="RHEA-COMP:10303"/>
        <dbReference type="ChEBI" id="CHEBI:15377"/>
        <dbReference type="ChEBI" id="CHEBI:15378"/>
        <dbReference type="ChEBI" id="CHEBI:15379"/>
        <dbReference type="ChEBI" id="CHEBI:16188"/>
        <dbReference type="ChEBI" id="CHEBI:17590"/>
        <dbReference type="ChEBI" id="CHEBI:29033"/>
        <dbReference type="ChEBI" id="CHEBI:29034"/>
        <dbReference type="EC" id="1.14.15.3"/>
    </reaction>
</comment>
<comment type="cofactor">
    <cofactor evidence="1">
        <name>Fe(3+)</name>
        <dbReference type="ChEBI" id="CHEBI:29034"/>
    </cofactor>
    <text evidence="1">Binds 2 Fe(3+) ions per subunit.</text>
</comment>
<comment type="pathway">
    <text>Hydrocarbon metabolism; alkane degradation.</text>
</comment>
<comment type="subcellular location">
    <subcellularLocation>
        <location evidence="5">Cell inner membrane</location>
        <topology evidence="5">Multi-pass membrane protein</topology>
    </subcellularLocation>
</comment>
<comment type="induction">
    <text evidence="4">Induced by AlkS and n-alkanes.</text>
</comment>
<comment type="similarity">
    <text evidence="5">Belongs to the fatty acid desaturase type 1 family. AlkB subfamily.</text>
</comment>
<gene>
    <name type="primary">alkB1</name>
    <name type="ordered locus">ABO_2707</name>
</gene>
<accession>Q0VKZ3</accession>
<accession>Q76C56</accession>
<proteinExistence type="evidence at protein level"/>
<organism>
    <name type="scientific">Alcanivorax borkumensis (strain ATCC 700651 / DSM 11573 / NCIMB 13689 / SK2)</name>
    <dbReference type="NCBI Taxonomy" id="393595"/>
    <lineage>
        <taxon>Bacteria</taxon>
        <taxon>Pseudomonadati</taxon>
        <taxon>Pseudomonadota</taxon>
        <taxon>Gammaproteobacteria</taxon>
        <taxon>Oceanospirillales</taxon>
        <taxon>Alcanivoracaceae</taxon>
        <taxon>Alcanivorax</taxon>
    </lineage>
</organism>